<gene>
    <name type="primary">stpA</name>
    <name type="ordered locus">slr0746</name>
</gene>
<proteinExistence type="evidence at protein level"/>
<accession>Q55034</accession>
<accession>Q54787</accession>
<feature type="chain" id="PRO_0000114472" description="Glucosylglycerol-phosphate phosphatase">
    <location>
        <begin position="1"/>
        <end position="422"/>
    </location>
</feature>
<feature type="active site" description="Proton donor" evidence="1">
    <location>
        <position position="403"/>
    </location>
</feature>
<feature type="sequence conflict" description="In Ref. 1; CAA53245." evidence="3" ref="1">
    <original>D</original>
    <variation>E</variation>
    <location>
        <position position="384"/>
    </location>
</feature>
<evidence type="ECO:0000250" key="1"/>
<evidence type="ECO:0000269" key="2">
    <source>
    </source>
</evidence>
<evidence type="ECO:0000305" key="3"/>
<dbReference type="EC" id="3.1.3.69" evidence="2"/>
<dbReference type="EMBL" id="U32936">
    <property type="protein sequence ID" value="AAB41279.1"/>
    <property type="molecule type" value="Genomic_DNA"/>
</dbReference>
<dbReference type="EMBL" id="X75566">
    <property type="protein sequence ID" value="CAA53245.1"/>
    <property type="molecule type" value="Genomic_DNA"/>
</dbReference>
<dbReference type="EMBL" id="BA000022">
    <property type="protein sequence ID" value="BAA18740.1"/>
    <property type="molecule type" value="Genomic_DNA"/>
</dbReference>
<dbReference type="PIR" id="S76828">
    <property type="entry name" value="S76828"/>
</dbReference>
<dbReference type="IntAct" id="Q55034">
    <property type="interactions" value="1"/>
</dbReference>
<dbReference type="STRING" id="1148.gene:10500512"/>
<dbReference type="PaxDb" id="1148-1653829"/>
<dbReference type="EnsemblBacteria" id="BAA18740">
    <property type="protein sequence ID" value="BAA18740"/>
    <property type="gene ID" value="BAA18740"/>
</dbReference>
<dbReference type="KEGG" id="syn:slr0746"/>
<dbReference type="eggNOG" id="ENOG502Z8T5">
    <property type="taxonomic scope" value="Bacteria"/>
</dbReference>
<dbReference type="InParanoid" id="Q55034"/>
<dbReference type="BioCyc" id="MetaCyc:MONOMER-20258"/>
<dbReference type="BRENDA" id="3.1.3.69">
    <property type="organism ID" value="6192"/>
</dbReference>
<dbReference type="Proteomes" id="UP000001425">
    <property type="component" value="Chromosome"/>
</dbReference>
<dbReference type="GO" id="GO:0050530">
    <property type="term" value="F:glucosylglycerol 3-phosphatase activity"/>
    <property type="evidence" value="ECO:0007669"/>
    <property type="project" value="UniProtKB-EC"/>
</dbReference>
<dbReference type="InterPro" id="IPR033379">
    <property type="entry name" value="Acid_Pase_AS"/>
</dbReference>
<dbReference type="InterPro" id="IPR012765">
    <property type="entry name" value="GGPPase"/>
</dbReference>
<dbReference type="NCBIfam" id="TIGR02399">
    <property type="entry name" value="salt_tol_Pase"/>
    <property type="match status" value="1"/>
</dbReference>
<dbReference type="Pfam" id="PF09506">
    <property type="entry name" value="Salt_tol_Pase"/>
    <property type="match status" value="1"/>
</dbReference>
<dbReference type="PIRSF" id="PIRSF020945">
    <property type="entry name" value="GGPPase"/>
    <property type="match status" value="1"/>
</dbReference>
<dbReference type="PROSITE" id="PS00778">
    <property type="entry name" value="HIS_ACID_PHOSPHAT_2"/>
    <property type="match status" value="1"/>
</dbReference>
<sequence>MVLHQQRFSLDHGAFCQTLAQTENLLIVQDLDGVCMELVQDPLSRRLDADYVRATTLFAEHFYVLTNGEHVGKRGVQGIVEQSFGDASFVQQEGLYLPGLAAGGVQWQDRHGKVSHPGVGQTELEFLAAVPEKITNCLKTFFGDRPHSLSPEQLQTGIEASVLDNVASPTANLNTLANLLQDFPQIYRDLQETMAQLLDQLMAEAVAQGLGNSFFVHYAPNLGRDERGKEIIRWAKAGDSGTTDFQFMLRGGVKEAGVLALLNRYYHNRTGQYPLGESFSARQAPPSHQDLLHLVKAQFDPALMPLIIGVGDTVTSQVDEATGEIRRGGSDRQFLQLIQDLGDWGNHGNLVVYVDSSQGEVKNRQPLQLETVAGQTQVVAGPGDMRDREEPLKINVAFPGGHDQYVAAFKQAAQRRRVHFSQ</sequence>
<organism>
    <name type="scientific">Synechocystis sp. (strain ATCC 27184 / PCC 6803 / Kazusa)</name>
    <dbReference type="NCBI Taxonomy" id="1111708"/>
    <lineage>
        <taxon>Bacteria</taxon>
        <taxon>Bacillati</taxon>
        <taxon>Cyanobacteriota</taxon>
        <taxon>Cyanophyceae</taxon>
        <taxon>Synechococcales</taxon>
        <taxon>Merismopediaceae</taxon>
        <taxon>Synechocystis</taxon>
    </lineage>
</organism>
<keyword id="KW-0378">Hydrolase</keyword>
<keyword id="KW-1185">Reference proteome</keyword>
<name>STPA_SYNY3</name>
<reference key="1">
    <citation type="journal article" date="1994" name="Russ. J. Plant Physiol.">
        <title>A gene stpA involved in the establishment of salt tolerance in the cyanobacterium Synechocystis PCC6803.</title>
        <authorList>
            <person name="Onana B."/>
            <person name="Jeanjean R."/>
            <person name="Joset F."/>
        </authorList>
    </citation>
    <scope>NUCLEOTIDE SEQUENCE [GENOMIC DNA]</scope>
</reference>
<reference key="2">
    <citation type="journal article" date="1996" name="Arch. Microbiol.">
        <title>Characterization of a glucosylglycerol-phosphate-accumulating, salt-sensitive mutant of the cyanobacterium Synechocystis sp. strain PCC 6803.</title>
        <authorList>
            <person name="Hagemann M."/>
            <person name="Richter S."/>
            <person name="Zuther E."/>
            <person name="Schoor A."/>
        </authorList>
    </citation>
    <scope>NUCLEOTIDE SEQUENCE [GENOMIC DNA]</scope>
</reference>
<reference key="3">
    <citation type="journal article" date="1996" name="DNA Res.">
        <title>Sequence analysis of the genome of the unicellular cyanobacterium Synechocystis sp. strain PCC6803. II. Sequence determination of the entire genome and assignment of potential protein-coding regions.</title>
        <authorList>
            <person name="Kaneko T."/>
            <person name="Sato S."/>
            <person name="Kotani H."/>
            <person name="Tanaka A."/>
            <person name="Asamizu E."/>
            <person name="Nakamura Y."/>
            <person name="Miyajima N."/>
            <person name="Hirosawa M."/>
            <person name="Sugiura M."/>
            <person name="Sasamoto S."/>
            <person name="Kimura T."/>
            <person name="Hosouchi T."/>
            <person name="Matsuno A."/>
            <person name="Muraki A."/>
            <person name="Nakazaki N."/>
            <person name="Naruo K."/>
            <person name="Okumura S."/>
            <person name="Shimpo S."/>
            <person name="Takeuchi C."/>
            <person name="Wada T."/>
            <person name="Watanabe A."/>
            <person name="Yamada M."/>
            <person name="Yasuda M."/>
            <person name="Tabata S."/>
        </authorList>
    </citation>
    <scope>NUCLEOTIDE SEQUENCE [LARGE SCALE GENOMIC DNA]</scope>
    <source>
        <strain>ATCC 27184 / PCC 6803 / Kazusa</strain>
    </source>
</reference>
<reference key="4">
    <citation type="journal article" date="1997" name="J. Bacteriol.">
        <title>The stpA gene form synechocystis sp. strain PCC 6803 encodes the glucosylglycerol-phosphate phosphatase involved in cyanobacterial osmotic response to salt shock.</title>
        <authorList>
            <person name="Hagemann M."/>
            <person name="Schoor A."/>
            <person name="Jeanjean R."/>
            <person name="Zuther E."/>
            <person name="Joset F."/>
        </authorList>
    </citation>
    <scope>FUNCTION</scope>
    <scope>CATALYTIC ACTIVITY</scope>
    <scope>CHARACTERIZATION</scope>
</reference>
<reference key="5">
    <citation type="journal article" date="2007" name="Mol. Microbiol.">
        <title>A membrane-bound FtsH protease is involved in osmoregulation in Synechocystis sp. PCC 6803: the compatible solute synthesizing enzyme GgpS is one of the targets for proteolysis.</title>
        <authorList>
            <person name="Stirnberg M."/>
            <person name="Fulda S."/>
            <person name="Huckauf J."/>
            <person name="Hagemann M."/>
            <person name="Kramer R."/>
            <person name="Marin K."/>
        </authorList>
    </citation>
    <scope>POSSIBLE INTERACTION WITH GGPS</scope>
</reference>
<comment type="function">
    <text evidence="2">Phosphorylates glucosylglycerol-phosphate the precursor of the osmoprotectant glucosylglycerol necessary for salt adaptation of Synechocystis.</text>
</comment>
<comment type="catalytic activity">
    <reaction evidence="2">
        <text>2-O-(alpha-D-glucopyranosyl)-sn-glycerol 3-phosphate + H2O = 2-O-(alpha-D-glucopyranosyl)glycerol + phosphate</text>
        <dbReference type="Rhea" id="RHEA:22652"/>
        <dbReference type="ChEBI" id="CHEBI:15377"/>
        <dbReference type="ChEBI" id="CHEBI:43474"/>
        <dbReference type="ChEBI" id="CHEBI:82766"/>
        <dbReference type="ChEBI" id="CHEBI:87089"/>
        <dbReference type="EC" id="3.1.3.69"/>
    </reaction>
</comment>
<comment type="subunit">
    <text evidence="3">Monomer. Interacts with GGPS.</text>
</comment>
<comment type="similarity">
    <text evidence="3">Belongs to the histidine acid phosphatase family.</text>
</comment>
<protein>
    <recommendedName>
        <fullName>Glucosylglycerol-phosphate phosphatase</fullName>
        <shortName>GGP-P</shortName>
        <ecNumber evidence="2">3.1.3.69</ecNumber>
    </recommendedName>
    <alternativeName>
        <fullName>Glucosylglycerol 3-phosphatase</fullName>
    </alternativeName>
    <alternativeName>
        <fullName>Salt tolerance protein A</fullName>
    </alternativeName>
</protein>